<reference key="1">
    <citation type="journal article" date="2007" name="Science">
        <title>The Calyptogena magnifica chemoautotrophic symbiont genome.</title>
        <authorList>
            <person name="Newton I.L.G."/>
            <person name="Woyke T."/>
            <person name="Auchtung T.A."/>
            <person name="Dilly G.F."/>
            <person name="Dutton R.J."/>
            <person name="Fisher M.C."/>
            <person name="Fontanez K.M."/>
            <person name="Lau E."/>
            <person name="Stewart F.J."/>
            <person name="Richardson P.M."/>
            <person name="Barry K.W."/>
            <person name="Saunders E."/>
            <person name="Detter J.C."/>
            <person name="Wu D."/>
            <person name="Eisen J.A."/>
            <person name="Cavanaugh C.M."/>
        </authorList>
    </citation>
    <scope>NUCLEOTIDE SEQUENCE [LARGE SCALE GENOMIC DNA]</scope>
</reference>
<dbReference type="EC" id="4.6.1.17" evidence="1"/>
<dbReference type="EMBL" id="CP000488">
    <property type="protein sequence ID" value="ABL02432.1"/>
    <property type="molecule type" value="Genomic_DNA"/>
</dbReference>
<dbReference type="RefSeq" id="WP_011738057.1">
    <property type="nucleotide sequence ID" value="NC_008610.1"/>
</dbReference>
<dbReference type="SMR" id="A1AWX5"/>
<dbReference type="STRING" id="413404.Rmag_0692"/>
<dbReference type="KEGG" id="rma:Rmag_0692"/>
<dbReference type="eggNOG" id="COG0315">
    <property type="taxonomic scope" value="Bacteria"/>
</dbReference>
<dbReference type="HOGENOM" id="CLU_074693_1_1_6"/>
<dbReference type="OrthoDB" id="9794429at2"/>
<dbReference type="UniPathway" id="UPA00344"/>
<dbReference type="Proteomes" id="UP000002587">
    <property type="component" value="Chromosome"/>
</dbReference>
<dbReference type="GO" id="GO:0061799">
    <property type="term" value="F:cyclic pyranopterin monophosphate synthase activity"/>
    <property type="evidence" value="ECO:0007669"/>
    <property type="project" value="UniProtKB-UniRule"/>
</dbReference>
<dbReference type="GO" id="GO:0061798">
    <property type="term" value="F:GTP 3',8'-cyclase activity"/>
    <property type="evidence" value="ECO:0007669"/>
    <property type="project" value="TreeGrafter"/>
</dbReference>
<dbReference type="GO" id="GO:0006777">
    <property type="term" value="P:Mo-molybdopterin cofactor biosynthetic process"/>
    <property type="evidence" value="ECO:0007669"/>
    <property type="project" value="UniProtKB-UniRule"/>
</dbReference>
<dbReference type="CDD" id="cd01420">
    <property type="entry name" value="MoaC_PE"/>
    <property type="match status" value="1"/>
</dbReference>
<dbReference type="FunFam" id="3.30.70.640:FF:000001">
    <property type="entry name" value="Cyclic pyranopterin monophosphate synthase"/>
    <property type="match status" value="1"/>
</dbReference>
<dbReference type="Gene3D" id="3.30.70.640">
    <property type="entry name" value="Molybdopterin cofactor biosynthesis C (MoaC) domain"/>
    <property type="match status" value="1"/>
</dbReference>
<dbReference type="HAMAP" id="MF_01224_B">
    <property type="entry name" value="MoaC_B"/>
    <property type="match status" value="1"/>
</dbReference>
<dbReference type="InterPro" id="IPR023045">
    <property type="entry name" value="MoaC"/>
</dbReference>
<dbReference type="InterPro" id="IPR047594">
    <property type="entry name" value="MoaC_bact/euk"/>
</dbReference>
<dbReference type="InterPro" id="IPR036522">
    <property type="entry name" value="MoaC_sf"/>
</dbReference>
<dbReference type="InterPro" id="IPR050105">
    <property type="entry name" value="MoCo_biosynth_MoaA/MoaC"/>
</dbReference>
<dbReference type="InterPro" id="IPR002820">
    <property type="entry name" value="Mopterin_CF_biosynth-C_dom"/>
</dbReference>
<dbReference type="NCBIfam" id="TIGR00581">
    <property type="entry name" value="moaC"/>
    <property type="match status" value="1"/>
</dbReference>
<dbReference type="NCBIfam" id="NF006870">
    <property type="entry name" value="PRK09364.1"/>
    <property type="match status" value="1"/>
</dbReference>
<dbReference type="PANTHER" id="PTHR22960:SF0">
    <property type="entry name" value="MOLYBDENUM COFACTOR BIOSYNTHESIS PROTEIN 1"/>
    <property type="match status" value="1"/>
</dbReference>
<dbReference type="PANTHER" id="PTHR22960">
    <property type="entry name" value="MOLYBDOPTERIN COFACTOR SYNTHESIS PROTEIN A"/>
    <property type="match status" value="1"/>
</dbReference>
<dbReference type="Pfam" id="PF01967">
    <property type="entry name" value="MoaC"/>
    <property type="match status" value="1"/>
</dbReference>
<dbReference type="SUPFAM" id="SSF55040">
    <property type="entry name" value="Molybdenum cofactor biosynthesis protein C, MoaC"/>
    <property type="match status" value="1"/>
</dbReference>
<organism>
    <name type="scientific">Ruthia magnifica subsp. Calyptogena magnifica</name>
    <dbReference type="NCBI Taxonomy" id="413404"/>
    <lineage>
        <taxon>Bacteria</taxon>
        <taxon>Pseudomonadati</taxon>
        <taxon>Pseudomonadota</taxon>
        <taxon>Gammaproteobacteria</taxon>
        <taxon>Candidatus Pseudothioglobaceae</taxon>
        <taxon>Candidatus Ruthturnera</taxon>
    </lineage>
</organism>
<name>MOAC_RUTMC</name>
<evidence type="ECO:0000255" key="1">
    <source>
        <dbReference type="HAMAP-Rule" id="MF_01224"/>
    </source>
</evidence>
<keyword id="KW-0456">Lyase</keyword>
<keyword id="KW-0501">Molybdenum cofactor biosynthesis</keyword>
<accession>A1AWX5</accession>
<proteinExistence type="inferred from homology"/>
<feature type="chain" id="PRO_1000073159" description="Cyclic pyranopterin monophosphate synthase">
    <location>
        <begin position="1"/>
        <end position="160"/>
    </location>
</feature>
<feature type="active site" evidence="1">
    <location>
        <position position="128"/>
    </location>
</feature>
<feature type="binding site" evidence="1">
    <location>
        <begin position="75"/>
        <end position="77"/>
    </location>
    <ligand>
        <name>substrate</name>
    </ligand>
</feature>
<feature type="binding site" evidence="1">
    <location>
        <begin position="113"/>
        <end position="114"/>
    </location>
    <ligand>
        <name>substrate</name>
    </ligand>
</feature>
<gene>
    <name evidence="1" type="primary">moaC</name>
    <name type="ordered locus">Rmag_0692</name>
</gene>
<sequence length="160" mass="17583">MDKLTHINQQGDAHMVDVSDKKITTREATAMAIVSMKQSTLELILSSSNTKGDVLVIARIAGIYAAKKCWDLIPLCHPLMLSKIMVELTPNEKNATIEIKTLVKLDGKTGVEMEALTAASVTALTIYDMCKSVDRFIKIGEIQLLEKKGGKSGHWKLENV</sequence>
<protein>
    <recommendedName>
        <fullName evidence="1">Cyclic pyranopterin monophosphate synthase</fullName>
        <ecNumber evidence="1">4.6.1.17</ecNumber>
    </recommendedName>
    <alternativeName>
        <fullName evidence="1">Molybdenum cofactor biosynthesis protein C</fullName>
    </alternativeName>
</protein>
<comment type="function">
    <text evidence="1">Catalyzes the conversion of (8S)-3',8-cyclo-7,8-dihydroguanosine 5'-triphosphate to cyclic pyranopterin monophosphate (cPMP).</text>
</comment>
<comment type="catalytic activity">
    <reaction evidence="1">
        <text>(8S)-3',8-cyclo-7,8-dihydroguanosine 5'-triphosphate = cyclic pyranopterin phosphate + diphosphate</text>
        <dbReference type="Rhea" id="RHEA:49580"/>
        <dbReference type="ChEBI" id="CHEBI:33019"/>
        <dbReference type="ChEBI" id="CHEBI:59648"/>
        <dbReference type="ChEBI" id="CHEBI:131766"/>
        <dbReference type="EC" id="4.6.1.17"/>
    </reaction>
</comment>
<comment type="pathway">
    <text evidence="1">Cofactor biosynthesis; molybdopterin biosynthesis.</text>
</comment>
<comment type="subunit">
    <text evidence="1">Homohexamer; trimer of dimers.</text>
</comment>
<comment type="similarity">
    <text evidence="1">Belongs to the MoaC family.</text>
</comment>